<reference key="1">
    <citation type="journal article" date="1998" name="DNA Res.">
        <title>Complete sequence and gene organization of the genome of a hyper-thermophilic archaebacterium, Pyrococcus horikoshii OT3.</title>
        <authorList>
            <person name="Kawarabayasi Y."/>
            <person name="Sawada M."/>
            <person name="Horikawa H."/>
            <person name="Haikawa Y."/>
            <person name="Hino Y."/>
            <person name="Yamamoto S."/>
            <person name="Sekine M."/>
            <person name="Baba S."/>
            <person name="Kosugi H."/>
            <person name="Hosoyama A."/>
            <person name="Nagai Y."/>
            <person name="Sakai M."/>
            <person name="Ogura K."/>
            <person name="Otsuka R."/>
            <person name="Nakazawa H."/>
            <person name="Takamiya M."/>
            <person name="Ohfuku Y."/>
            <person name="Funahashi T."/>
            <person name="Tanaka T."/>
            <person name="Kudoh Y."/>
            <person name="Yamazaki J."/>
            <person name="Kushida N."/>
            <person name="Oguchi A."/>
            <person name="Aoki K."/>
            <person name="Yoshizawa T."/>
            <person name="Nakamura Y."/>
            <person name="Robb F.T."/>
            <person name="Horikoshi K."/>
            <person name="Masuchi Y."/>
            <person name="Shizuya H."/>
            <person name="Kikuchi H."/>
        </authorList>
    </citation>
    <scope>NUCLEOTIDE SEQUENCE [LARGE SCALE GENOMIC DNA]</scope>
    <source>
        <strain>ATCC 700860 / DSM 12428 / JCM 9974 / NBRC 100139 / OT-3</strain>
    </source>
</reference>
<sequence>MIRVIEKGDKVSLPFSRGILTRSITSVGIDVDLAYSIAIEVQEELVKKGKTIVTKDEIRKLTYQKLIEKGFKEEAKRYIFWRRFRKMKVPLIILLGGPTGVGKSTIATELAFRLGIRSVIGTDSIREVLRKIITPELLPTIHTSTFLAWKELKGTVTDSPIVAGFESQVSAVTVGINAIIERAVREGLNAIIEGIHVVPGFVKVEGEMTFMYMLIARSREDLEARFYERTRYSKRPADYYISHLDEILEIQDYLIRRAKKFNVPVIENVELEETVSKIMEDIMQKTIEIMKGKGLDLLEEP</sequence>
<protein>
    <recommendedName>
        <fullName evidence="1">2-phosphoglycerate kinase</fullName>
        <shortName evidence="1">2PGK</shortName>
        <ecNumber evidence="1">2.7.2.16</ecNumber>
    </recommendedName>
</protein>
<name>PGK2_PYRHO</name>
<dbReference type="EC" id="2.7.2.16" evidence="1"/>
<dbReference type="EMBL" id="BA000001">
    <property type="protein sequence ID" value="BAA29218.1"/>
    <property type="molecule type" value="Genomic_DNA"/>
</dbReference>
<dbReference type="PIR" id="C71236">
    <property type="entry name" value="C71236"/>
</dbReference>
<dbReference type="RefSeq" id="WP_010884260.1">
    <property type="nucleotide sequence ID" value="NC_000961.1"/>
</dbReference>
<dbReference type="STRING" id="70601.gene:9377059"/>
<dbReference type="EnsemblBacteria" id="BAA29218">
    <property type="protein sequence ID" value="BAA29218"/>
    <property type="gene ID" value="BAA29218"/>
</dbReference>
<dbReference type="GeneID" id="1444042"/>
<dbReference type="KEGG" id="pho:PH0149"/>
<dbReference type="eggNOG" id="arCOG01967">
    <property type="taxonomic scope" value="Archaea"/>
</dbReference>
<dbReference type="OrthoDB" id="358692at2157"/>
<dbReference type="UniPathway" id="UPA00551">
    <property type="reaction ID" value="UER00609"/>
</dbReference>
<dbReference type="Proteomes" id="UP000000752">
    <property type="component" value="Chromosome"/>
</dbReference>
<dbReference type="GO" id="GO:0005524">
    <property type="term" value="F:ATP binding"/>
    <property type="evidence" value="ECO:0007669"/>
    <property type="project" value="UniProtKB-KW"/>
</dbReference>
<dbReference type="GO" id="GO:0016301">
    <property type="term" value="F:kinase activity"/>
    <property type="evidence" value="ECO:0007669"/>
    <property type="project" value="UniProtKB-KW"/>
</dbReference>
<dbReference type="GO" id="GO:0016774">
    <property type="term" value="F:phosphotransferase activity, carboxyl group as acceptor"/>
    <property type="evidence" value="ECO:0007669"/>
    <property type="project" value="UniProtKB-UniRule"/>
</dbReference>
<dbReference type="Gene3D" id="3.40.50.300">
    <property type="entry name" value="P-loop containing nucleotide triphosphate hydrolases"/>
    <property type="match status" value="1"/>
</dbReference>
<dbReference type="HAMAP" id="MF_00769">
    <property type="entry name" value="2PGK"/>
    <property type="match status" value="1"/>
</dbReference>
<dbReference type="InterPro" id="IPR020872">
    <property type="entry name" value="2PKG"/>
</dbReference>
<dbReference type="InterPro" id="IPR005144">
    <property type="entry name" value="ATP-cone_dom"/>
</dbReference>
<dbReference type="InterPro" id="IPR027417">
    <property type="entry name" value="P-loop_NTPase"/>
</dbReference>
<dbReference type="NCBIfam" id="NF003259">
    <property type="entry name" value="PRK04220.1"/>
    <property type="match status" value="1"/>
</dbReference>
<dbReference type="PANTHER" id="PTHR33477">
    <property type="entry name" value="P-LOOP NTPASE DOMAIN-CONTAINING PROTEIN LPA1 HOMOLOG 1"/>
    <property type="match status" value="1"/>
</dbReference>
<dbReference type="PANTHER" id="PTHR33477:SF3">
    <property type="entry name" value="P-LOOP NTPASE DOMAIN-CONTAINING PROTEIN LPA1 HOMOLOG 1"/>
    <property type="match status" value="1"/>
</dbReference>
<dbReference type="Pfam" id="PF03477">
    <property type="entry name" value="ATP-cone"/>
    <property type="match status" value="1"/>
</dbReference>
<dbReference type="SUPFAM" id="SSF52540">
    <property type="entry name" value="P-loop containing nucleoside triphosphate hydrolases"/>
    <property type="match status" value="1"/>
</dbReference>
<dbReference type="PROSITE" id="PS51161">
    <property type="entry name" value="ATP_CONE"/>
    <property type="match status" value="1"/>
</dbReference>
<feature type="chain" id="PRO_0000156155" description="2-phosphoglycerate kinase">
    <location>
        <begin position="1"/>
        <end position="301"/>
    </location>
</feature>
<feature type="domain" description="ATP-cone" evidence="1">
    <location>
        <begin position="2"/>
        <end position="89"/>
    </location>
</feature>
<evidence type="ECO:0000255" key="1">
    <source>
        <dbReference type="HAMAP-Rule" id="MF_00769"/>
    </source>
</evidence>
<proteinExistence type="inferred from homology"/>
<keyword id="KW-0067">ATP-binding</keyword>
<keyword id="KW-0418">Kinase</keyword>
<keyword id="KW-0547">Nucleotide-binding</keyword>
<keyword id="KW-0808">Transferase</keyword>
<accession>O57882</accession>
<comment type="function">
    <text evidence="1">Catalyzes the phosphorylation of 2-phosphoglycerate to 2,3-diphosphoglycerate. Involved in the biosynthesis of cyclic 2,3-bisphosphoglycerate, a thermoprotectant.</text>
</comment>
<comment type="catalytic activity">
    <reaction evidence="1">
        <text>(2R)-2-phosphoglycerate + ATP = (2R)-2,3-bisphosphoglycerate + ADP + H(+)</text>
        <dbReference type="Rhea" id="RHEA:42408"/>
        <dbReference type="ChEBI" id="CHEBI:15378"/>
        <dbReference type="ChEBI" id="CHEBI:30616"/>
        <dbReference type="ChEBI" id="CHEBI:58248"/>
        <dbReference type="ChEBI" id="CHEBI:58289"/>
        <dbReference type="ChEBI" id="CHEBI:456216"/>
        <dbReference type="EC" id="2.7.2.16"/>
    </reaction>
</comment>
<comment type="cofactor">
    <cofactor evidence="1">
        <name>a divalent metal cation</name>
        <dbReference type="ChEBI" id="CHEBI:60240"/>
    </cofactor>
</comment>
<comment type="pathway">
    <text evidence="1">Thermoadapter biosynthesis; cyclic 2,3-diphosphoglycerate biosynthesis; cyclic 2,3-diphosphoglycerate from 2-phospho-D-glycerate: step 1/2.</text>
</comment>
<comment type="similarity">
    <text evidence="1">Belongs to the 2-phosphoglycerate kinase family.</text>
</comment>
<organism>
    <name type="scientific">Pyrococcus horikoshii (strain ATCC 700860 / DSM 12428 / JCM 9974 / NBRC 100139 / OT-3)</name>
    <dbReference type="NCBI Taxonomy" id="70601"/>
    <lineage>
        <taxon>Archaea</taxon>
        <taxon>Methanobacteriati</taxon>
        <taxon>Methanobacteriota</taxon>
        <taxon>Thermococci</taxon>
        <taxon>Thermococcales</taxon>
        <taxon>Thermococcaceae</taxon>
        <taxon>Pyrococcus</taxon>
    </lineage>
</organism>
<gene>
    <name evidence="1" type="primary">pgk2</name>
    <name type="ordered locus">PH0149</name>
</gene>